<evidence type="ECO:0000255" key="1"/>
<evidence type="ECO:0000255" key="2">
    <source>
        <dbReference type="PROSITE-ProRule" id="PRU00498"/>
    </source>
</evidence>
<evidence type="ECO:0000269" key="3">
    <source>
    </source>
</evidence>
<evidence type="ECO:0000303" key="4">
    <source>
    </source>
</evidence>
<evidence type="ECO:0000305" key="5"/>
<gene>
    <name evidence="4" type="primary">HEX1</name>
    <name type="ORF">CPSG_08485</name>
</gene>
<protein>
    <recommendedName>
        <fullName>Beta-hexosaminidase 1</fullName>
        <ecNumber evidence="3">3.2.1.52</ecNumber>
    </recommendedName>
    <alternativeName>
        <fullName evidence="5">Beta-GlcNAcase 1</fullName>
    </alternativeName>
    <alternativeName>
        <fullName evidence="4">Beta-N-acetylhexosaminidase 1</fullName>
    </alternativeName>
    <alternativeName>
        <fullName evidence="5">N-acetyl-beta-glucosaminidase 1</fullName>
    </alternativeName>
</protein>
<name>HEX1_COCPS</name>
<organism>
    <name type="scientific">Coccidioides posadasii (strain RMSCC 757 / Silveira)</name>
    <name type="common">Valley fever fungus</name>
    <dbReference type="NCBI Taxonomy" id="443226"/>
    <lineage>
        <taxon>Eukaryota</taxon>
        <taxon>Fungi</taxon>
        <taxon>Dikarya</taxon>
        <taxon>Ascomycota</taxon>
        <taxon>Pezizomycotina</taxon>
        <taxon>Eurotiomycetes</taxon>
        <taxon>Eurotiomycetidae</taxon>
        <taxon>Onygenales</taxon>
        <taxon>Onygenaceae</taxon>
        <taxon>Coccidioides</taxon>
    </lineage>
</organism>
<keyword id="KW-0325">Glycoprotein</keyword>
<keyword id="KW-0326">Glycosidase</keyword>
<keyword id="KW-0378">Hydrolase</keyword>
<keyword id="KW-1185">Reference proteome</keyword>
<keyword id="KW-0732">Signal</keyword>
<proteinExistence type="evidence at protein level"/>
<feature type="signal peptide" evidence="1">
    <location>
        <begin position="1"/>
        <end position="20"/>
    </location>
</feature>
<feature type="chain" id="PRO_0000432745" description="Beta-hexosaminidase 1" evidence="1">
    <location>
        <begin position="21"/>
        <end position="595"/>
    </location>
</feature>
<feature type="glycosylation site" description="N-linked (GlcNAc...) asparagine" evidence="2">
    <location>
        <position position="313"/>
    </location>
</feature>
<reference key="1">
    <citation type="journal article" date="2010" name="Med. Mycol.">
        <title>Molecular cloning, characterization and expression analysis of two beta-N-acetylhexosaminidase homologs of Coccidioides posadasii.</title>
        <authorList>
            <person name="Lunetta J.M."/>
            <person name="Johnson S.M."/>
            <person name="Pappagianis D."/>
        </authorList>
    </citation>
    <scope>NUCLEOTIDE SEQUENCE [MRNA]</scope>
    <scope>FUNCTION</scope>
    <scope>CATALYTIC ACTIVITY</scope>
    <scope>INDUCTION</scope>
    <source>
        <strain>RMSCC 757 / Silveira</strain>
    </source>
</reference>
<reference key="2">
    <citation type="submission" date="2010-03" db="EMBL/GenBank/DDBJ databases">
        <title>The genome sequence of Coccidioides posadasii strain Silveira.</title>
        <authorList>
            <consortium name="The Broad Institute Genome Sequencing Center for Infectious Disease"/>
            <person name="Neafsey D."/>
            <person name="Orbach M."/>
            <person name="Henn M.R."/>
            <person name="Cole G.T."/>
            <person name="Galgiani J."/>
            <person name="Gardner M.J."/>
            <person name="Kirkland T.N."/>
            <person name="Taylor J.W."/>
            <person name="Young S.K."/>
            <person name="Zeng Q."/>
            <person name="Koehrsen M."/>
            <person name="Alvarado L."/>
            <person name="Berlin A."/>
            <person name="Borenstein D."/>
            <person name="Chapman S.B."/>
            <person name="Chen Z."/>
            <person name="Engels R."/>
            <person name="Freedman E."/>
            <person name="Gellesch M."/>
            <person name="Goldberg J."/>
            <person name="Griggs A."/>
            <person name="Gujja S."/>
            <person name="Heilman E."/>
            <person name="Heiman D."/>
            <person name="Howarth C."/>
            <person name="Jen D."/>
            <person name="Larson L."/>
            <person name="Mehta T."/>
            <person name="Neiman D."/>
            <person name="Park D."/>
            <person name="Pearson M."/>
            <person name="Richards J."/>
            <person name="Roberts A."/>
            <person name="Saif S."/>
            <person name="Shea T."/>
            <person name="Shenoy N."/>
            <person name="Sisk P."/>
            <person name="Stolte C."/>
            <person name="Sykes S."/>
            <person name="Walk T."/>
            <person name="White J."/>
            <person name="Yandava C."/>
            <person name="Haas B."/>
            <person name="Nusbaum C."/>
            <person name="Birren B."/>
        </authorList>
    </citation>
    <scope>NUCLEOTIDE SEQUENCE [LARGE SCALE GENOMIC DNA]</scope>
    <source>
        <strain>RMSCC 757 / Silveira</strain>
    </source>
</reference>
<dbReference type="EC" id="3.2.1.52" evidence="3"/>
<dbReference type="EMBL" id="DQ232847">
    <property type="protein sequence ID" value="ABB18373.1"/>
    <property type="molecule type" value="mRNA"/>
</dbReference>
<dbReference type="EMBL" id="GL636503">
    <property type="protein sequence ID" value="EFW14827.1"/>
    <property type="molecule type" value="Genomic_DNA"/>
</dbReference>
<dbReference type="SMR" id="E9DFH0"/>
<dbReference type="STRING" id="443226.E9DFH0"/>
<dbReference type="CAZy" id="GH20">
    <property type="family name" value="Glycoside Hydrolase Family 20"/>
</dbReference>
<dbReference type="GlyCosmos" id="E9DFH0">
    <property type="glycosylation" value="1 site, No reported glycans"/>
</dbReference>
<dbReference type="KEGG" id="cpw:9696864"/>
<dbReference type="VEuPathDB" id="FungiDB:CPSG_08485"/>
<dbReference type="VEuPathDB" id="FungiDB:D8B26_000511"/>
<dbReference type="eggNOG" id="KOG2499">
    <property type="taxonomic scope" value="Eukaryota"/>
</dbReference>
<dbReference type="HOGENOM" id="CLU_007082_0_2_1"/>
<dbReference type="OMA" id="KMWPRAA"/>
<dbReference type="OrthoDB" id="9137at33183"/>
<dbReference type="BRENDA" id="3.2.1.52">
    <property type="organism ID" value="9184"/>
</dbReference>
<dbReference type="Proteomes" id="UP000002497">
    <property type="component" value="Unassembled WGS sequence"/>
</dbReference>
<dbReference type="GO" id="GO:0016020">
    <property type="term" value="C:membrane"/>
    <property type="evidence" value="ECO:0007669"/>
    <property type="project" value="TreeGrafter"/>
</dbReference>
<dbReference type="GO" id="GO:0016231">
    <property type="term" value="F:beta-N-acetylglucosaminidase activity"/>
    <property type="evidence" value="ECO:0007669"/>
    <property type="project" value="TreeGrafter"/>
</dbReference>
<dbReference type="GO" id="GO:0005975">
    <property type="term" value="P:carbohydrate metabolic process"/>
    <property type="evidence" value="ECO:0007669"/>
    <property type="project" value="InterPro"/>
</dbReference>
<dbReference type="GO" id="GO:0030203">
    <property type="term" value="P:glycosaminoglycan metabolic process"/>
    <property type="evidence" value="ECO:0007669"/>
    <property type="project" value="TreeGrafter"/>
</dbReference>
<dbReference type="CDD" id="cd06562">
    <property type="entry name" value="GH20_HexA_HexB-like"/>
    <property type="match status" value="1"/>
</dbReference>
<dbReference type="FunFam" id="3.20.20.80:FF:000063">
    <property type="entry name" value="Beta-hexosaminidase"/>
    <property type="match status" value="1"/>
</dbReference>
<dbReference type="Gene3D" id="3.30.379.10">
    <property type="entry name" value="Chitobiase/beta-hexosaminidase domain 2-like"/>
    <property type="match status" value="1"/>
</dbReference>
<dbReference type="Gene3D" id="3.20.20.80">
    <property type="entry name" value="Glycosidases"/>
    <property type="match status" value="1"/>
</dbReference>
<dbReference type="InterPro" id="IPR025705">
    <property type="entry name" value="Beta_hexosaminidase_sua/sub"/>
</dbReference>
<dbReference type="InterPro" id="IPR015883">
    <property type="entry name" value="Glyco_hydro_20_cat"/>
</dbReference>
<dbReference type="InterPro" id="IPR017853">
    <property type="entry name" value="Glycoside_hydrolase_SF"/>
</dbReference>
<dbReference type="InterPro" id="IPR029018">
    <property type="entry name" value="Hex-like_dom2"/>
</dbReference>
<dbReference type="InterPro" id="IPR029019">
    <property type="entry name" value="HEX_eukaryotic_N"/>
</dbReference>
<dbReference type="PANTHER" id="PTHR22600">
    <property type="entry name" value="BETA-HEXOSAMINIDASE"/>
    <property type="match status" value="1"/>
</dbReference>
<dbReference type="PANTHER" id="PTHR22600:SF26">
    <property type="entry name" value="BETA-N-ACETYLHEXOSAMINIDASE"/>
    <property type="match status" value="1"/>
</dbReference>
<dbReference type="Pfam" id="PF00728">
    <property type="entry name" value="Glyco_hydro_20"/>
    <property type="match status" value="1"/>
</dbReference>
<dbReference type="Pfam" id="PF14845">
    <property type="entry name" value="Glycohydro_20b2"/>
    <property type="match status" value="1"/>
</dbReference>
<dbReference type="PIRSF" id="PIRSF001093">
    <property type="entry name" value="B-hxosamndse_ab_euk"/>
    <property type="match status" value="1"/>
</dbReference>
<dbReference type="PRINTS" id="PR00738">
    <property type="entry name" value="GLHYDRLASE20"/>
</dbReference>
<dbReference type="SUPFAM" id="SSF51445">
    <property type="entry name" value="(Trans)glycosidases"/>
    <property type="match status" value="1"/>
</dbReference>
<dbReference type="SUPFAM" id="SSF55545">
    <property type="entry name" value="beta-N-acetylhexosaminidase-like domain"/>
    <property type="match status" value="1"/>
</dbReference>
<accession>E9DFH0</accession>
<accession>Q309C3</accession>
<sequence length="595" mass="68098">MRFAYLATLAGSLLAGLAQAVKVNPLPAPQHIKWGESGPQYLDWNVKYSGPRDRTIIAAWRRTWGSIVQLRWTPAALEAPIPTFAPFIVGNGKRDAHSNRRILRVSVKVENTNVDLQHGVDESYTLQIRDKSDSIRITAKTTWGVLRAFTTLQQIVIFKRGRFLVEQPVDIKDYPLYPVRGIMIDTARNFISVKKIFEQLDGMALSKLNVLHWHITDTQSWPVEVRSYPQMTEDAYSRRETYGPSDIRKVIEYARARGIRVVPEIDMPGHSASGWRKIDPDIVACADSWWSNDDWEKHTAVQPNPGQLDIANNKTYKVVEKVYNDISRIFTDDWFHVGGDELQPNCFLTSKIVRDWLKQGSRTFNDLLQHWVDKTVPMMKKVKKNRRLLMWEDVLLSGNMHAHRVPRDIIMQSWNGGLANIKKLTARGYEVIVSSADFLYLDCGYGGWVGNDPRYNVMENPDPETPNFNYGGNGGSWCGPYKTWQRIYNYDFTDGLNYAEKKRVIGAIAPLWSEQADDVVISNKMWPRAAALAELVWSGNVGKDGKKRTTLMTQRILNFREYLVANGIMAAPLQPKYCLKHPHSCDLYYDQTVIM</sequence>
<comment type="function">
    <text evidence="3">Beta-hexosaminidase that shows a broad substrate specificity.</text>
</comment>
<comment type="catalytic activity">
    <reaction evidence="3">
        <text>Hydrolysis of terminal non-reducing N-acetyl-D-hexosamine residues in N-acetyl-beta-D-hexosaminides.</text>
        <dbReference type="EC" id="3.2.1.52"/>
    </reaction>
</comment>
<comment type="induction">
    <text evidence="3">Expression is induced by N-acetylglucosamine.</text>
</comment>
<comment type="similarity">
    <text evidence="5">Belongs to the glycosyl hydrolase 20 family.</text>
</comment>